<comment type="function">
    <text evidence="2">Involved in base excision repair of DNA damaged by oxidation or by mutagenic agents. Acts as a DNA glycosylase that recognizes and removes damaged bases. Has a preference for oxidized purines, such as 7,8-dihydro-8-oxoguanine (8-oxoG). Has AP (apurinic/apyrimidinic) lyase activity and introduces nicks in the DNA strand. Cleaves the DNA backbone by beta-delta elimination to generate a single-strand break at the site of the removed base with both 3'- and 5'-phosphates.</text>
</comment>
<comment type="catalytic activity">
    <reaction evidence="2">
        <text>Hydrolysis of DNA containing ring-opened 7-methylguanine residues, releasing 2,6-diamino-4-hydroxy-5-(N-methyl)formamidopyrimidine.</text>
        <dbReference type="EC" id="3.2.2.23"/>
    </reaction>
</comment>
<comment type="catalytic activity">
    <reaction evidence="2">
        <text>2'-deoxyribonucleotide-(2'-deoxyribose 5'-phosphate)-2'-deoxyribonucleotide-DNA = a 3'-end 2'-deoxyribonucleotide-(2,3-dehydro-2,3-deoxyribose 5'-phosphate)-DNA + a 5'-end 5'-phospho-2'-deoxyribonucleoside-DNA + H(+)</text>
        <dbReference type="Rhea" id="RHEA:66592"/>
        <dbReference type="Rhea" id="RHEA-COMP:13180"/>
        <dbReference type="Rhea" id="RHEA-COMP:16897"/>
        <dbReference type="Rhea" id="RHEA-COMP:17067"/>
        <dbReference type="ChEBI" id="CHEBI:15378"/>
        <dbReference type="ChEBI" id="CHEBI:136412"/>
        <dbReference type="ChEBI" id="CHEBI:157695"/>
        <dbReference type="ChEBI" id="CHEBI:167181"/>
        <dbReference type="EC" id="4.2.99.18"/>
    </reaction>
</comment>
<comment type="cofactor">
    <cofactor evidence="2">
        <name>Zn(2+)</name>
        <dbReference type="ChEBI" id="CHEBI:29105"/>
    </cofactor>
    <text evidence="2">Binds 1 zinc ion per subunit.</text>
</comment>
<comment type="subunit">
    <text evidence="2">Monomer.</text>
</comment>
<comment type="similarity">
    <text evidence="2">Belongs to the FPG family.</text>
</comment>
<organism>
    <name type="scientific">Streptococcus pyogenes serotype M3 (strain ATCC BAA-595 / MGAS315)</name>
    <dbReference type="NCBI Taxonomy" id="198466"/>
    <lineage>
        <taxon>Bacteria</taxon>
        <taxon>Bacillati</taxon>
        <taxon>Bacillota</taxon>
        <taxon>Bacilli</taxon>
        <taxon>Lactobacillales</taxon>
        <taxon>Streptococcaceae</taxon>
        <taxon>Streptococcus</taxon>
    </lineage>
</organism>
<accession>P0DB14</accession>
<accession>Q8K8D0</accession>
<feature type="initiator methionine" description="Removed" evidence="1">
    <location>
        <position position="1"/>
    </location>
</feature>
<feature type="chain" id="PRO_0000170872" description="Formamidopyrimidine-DNA glycosylase">
    <location>
        <begin position="2"/>
        <end position="275"/>
    </location>
</feature>
<feature type="zinc finger region" description="FPG-type" evidence="2">
    <location>
        <begin position="238"/>
        <end position="272"/>
    </location>
</feature>
<feature type="active site" description="Schiff-base intermediate with DNA" evidence="2">
    <location>
        <position position="2"/>
    </location>
</feature>
<feature type="active site" description="Proton donor" evidence="2">
    <location>
        <position position="3"/>
    </location>
</feature>
<feature type="active site" description="Proton donor; for beta-elimination activity" evidence="2">
    <location>
        <position position="58"/>
    </location>
</feature>
<feature type="active site" description="Proton donor; for delta-elimination activity" evidence="2">
    <location>
        <position position="262"/>
    </location>
</feature>
<feature type="binding site" evidence="2">
    <location>
        <position position="91"/>
    </location>
    <ligand>
        <name>DNA</name>
        <dbReference type="ChEBI" id="CHEBI:16991"/>
    </ligand>
</feature>
<feature type="binding site" evidence="2">
    <location>
        <position position="110"/>
    </location>
    <ligand>
        <name>DNA</name>
        <dbReference type="ChEBI" id="CHEBI:16991"/>
    </ligand>
</feature>
<sequence>MPELPEVETVRRGLETLVLGQEIVAVTLKVPKMVKTDLETFALTLPGQIIQSVGRRGKYLLIDLGQLVLVSHLRMEGKYLLFPDEVPDNKHFHVFFELKNGSTLVYQDVRKFGTFDLIAKSQLSAFFAKRKLGPEPKKETFKLKTFEAALLSSQKPIKPHLLDQTLVAGLGNIYVDEVLWAAKVHPETASSRLNKAEIKRLHDETIRILALGIEKGGSTVRTYRNALGADGTMQDYLQVYGQTGKSCPRCGQAIVKLKVGGRGTHICPKCQKKRP</sequence>
<reference key="1">
    <citation type="journal article" date="2002" name="Proc. Natl. Acad. Sci. U.S.A.">
        <title>Genome sequence of a serotype M3 strain of group A Streptococcus: phage-encoded toxins, the high-virulence phenotype, and clone emergence.</title>
        <authorList>
            <person name="Beres S.B."/>
            <person name="Sylva G.L."/>
            <person name="Barbian K.D."/>
            <person name="Lei B."/>
            <person name="Hoff J.S."/>
            <person name="Mammarella N.D."/>
            <person name="Liu M.-Y."/>
            <person name="Smoot J.C."/>
            <person name="Porcella S.F."/>
            <person name="Parkins L.D."/>
            <person name="Campbell D.S."/>
            <person name="Smith T.M."/>
            <person name="McCormick J.K."/>
            <person name="Leung D.Y.M."/>
            <person name="Schlievert P.M."/>
            <person name="Musser J.M."/>
        </authorList>
    </citation>
    <scope>NUCLEOTIDE SEQUENCE [LARGE SCALE GENOMIC DNA]</scope>
    <source>
        <strain>ATCC BAA-595 / MGAS315</strain>
    </source>
</reference>
<name>FPG_STRP3</name>
<protein>
    <recommendedName>
        <fullName evidence="2">Formamidopyrimidine-DNA glycosylase</fullName>
        <shortName evidence="2">Fapy-DNA glycosylase</shortName>
        <ecNumber evidence="2">3.2.2.23</ecNumber>
    </recommendedName>
    <alternativeName>
        <fullName>DNA-(apurinic or apyrimidinic site) lyase mutM</fullName>
        <shortName>AP lyase mutM</shortName>
        <ecNumber evidence="2">4.2.99.18</ecNumber>
    </alternativeName>
</protein>
<keyword id="KW-0227">DNA damage</keyword>
<keyword id="KW-0234">DNA repair</keyword>
<keyword id="KW-0238">DNA-binding</keyword>
<keyword id="KW-0326">Glycosidase</keyword>
<keyword id="KW-0378">Hydrolase</keyword>
<keyword id="KW-0456">Lyase</keyword>
<keyword id="KW-0479">Metal-binding</keyword>
<keyword id="KW-0511">Multifunctional enzyme</keyword>
<keyword id="KW-0862">Zinc</keyword>
<keyword id="KW-0863">Zinc-finger</keyword>
<dbReference type="EC" id="3.2.2.23" evidence="2"/>
<dbReference type="EC" id="4.2.99.18" evidence="2"/>
<dbReference type="EMBL" id="AE014074">
    <property type="protein sequence ID" value="AAM78954.1"/>
    <property type="molecule type" value="Genomic_DNA"/>
</dbReference>
<dbReference type="RefSeq" id="WP_011054256.1">
    <property type="nucleotide sequence ID" value="NC_004070.1"/>
</dbReference>
<dbReference type="SMR" id="P0DB14"/>
<dbReference type="KEGG" id="spg:SpyM3_0347"/>
<dbReference type="HOGENOM" id="CLU_038423_1_2_9"/>
<dbReference type="Proteomes" id="UP000000564">
    <property type="component" value="Chromosome"/>
</dbReference>
<dbReference type="GO" id="GO:0034039">
    <property type="term" value="F:8-oxo-7,8-dihydroguanine DNA N-glycosylase activity"/>
    <property type="evidence" value="ECO:0007669"/>
    <property type="project" value="TreeGrafter"/>
</dbReference>
<dbReference type="GO" id="GO:0140078">
    <property type="term" value="F:class I DNA-(apurinic or apyrimidinic site) endonuclease activity"/>
    <property type="evidence" value="ECO:0007669"/>
    <property type="project" value="UniProtKB-EC"/>
</dbReference>
<dbReference type="GO" id="GO:0003684">
    <property type="term" value="F:damaged DNA binding"/>
    <property type="evidence" value="ECO:0007669"/>
    <property type="project" value="InterPro"/>
</dbReference>
<dbReference type="GO" id="GO:0008270">
    <property type="term" value="F:zinc ion binding"/>
    <property type="evidence" value="ECO:0007669"/>
    <property type="project" value="UniProtKB-UniRule"/>
</dbReference>
<dbReference type="GO" id="GO:0006284">
    <property type="term" value="P:base-excision repair"/>
    <property type="evidence" value="ECO:0007669"/>
    <property type="project" value="InterPro"/>
</dbReference>
<dbReference type="CDD" id="cd08966">
    <property type="entry name" value="EcFpg-like_N"/>
    <property type="match status" value="1"/>
</dbReference>
<dbReference type="FunFam" id="1.10.8.50:FF:000003">
    <property type="entry name" value="Formamidopyrimidine-DNA glycosylase"/>
    <property type="match status" value="1"/>
</dbReference>
<dbReference type="FunFam" id="3.20.190.10:FF:000001">
    <property type="entry name" value="Formamidopyrimidine-DNA glycosylase"/>
    <property type="match status" value="1"/>
</dbReference>
<dbReference type="Gene3D" id="1.10.8.50">
    <property type="match status" value="1"/>
</dbReference>
<dbReference type="Gene3D" id="3.20.190.10">
    <property type="entry name" value="MutM-like, N-terminal"/>
    <property type="match status" value="1"/>
</dbReference>
<dbReference type="HAMAP" id="MF_00103">
    <property type="entry name" value="Fapy_DNA_glycosyl"/>
    <property type="match status" value="1"/>
</dbReference>
<dbReference type="InterPro" id="IPR015886">
    <property type="entry name" value="DNA_glyclase/AP_lyase_DNA-bd"/>
</dbReference>
<dbReference type="InterPro" id="IPR015887">
    <property type="entry name" value="DNA_glyclase_Znf_dom_DNA_BS"/>
</dbReference>
<dbReference type="InterPro" id="IPR020629">
    <property type="entry name" value="Formamido-pyr_DNA_Glyclase"/>
</dbReference>
<dbReference type="InterPro" id="IPR012319">
    <property type="entry name" value="FPG_cat"/>
</dbReference>
<dbReference type="InterPro" id="IPR035937">
    <property type="entry name" value="MutM-like_N-ter"/>
</dbReference>
<dbReference type="InterPro" id="IPR010979">
    <property type="entry name" value="Ribosomal_uS13-like_H2TH"/>
</dbReference>
<dbReference type="InterPro" id="IPR000214">
    <property type="entry name" value="Znf_DNA_glyclase/AP_lyase"/>
</dbReference>
<dbReference type="InterPro" id="IPR010663">
    <property type="entry name" value="Znf_FPG/IleRS"/>
</dbReference>
<dbReference type="NCBIfam" id="TIGR00577">
    <property type="entry name" value="fpg"/>
    <property type="match status" value="1"/>
</dbReference>
<dbReference type="NCBIfam" id="NF002211">
    <property type="entry name" value="PRK01103.1"/>
    <property type="match status" value="1"/>
</dbReference>
<dbReference type="PANTHER" id="PTHR22993">
    <property type="entry name" value="FORMAMIDOPYRIMIDINE-DNA GLYCOSYLASE"/>
    <property type="match status" value="1"/>
</dbReference>
<dbReference type="PANTHER" id="PTHR22993:SF9">
    <property type="entry name" value="FORMAMIDOPYRIMIDINE-DNA GLYCOSYLASE"/>
    <property type="match status" value="1"/>
</dbReference>
<dbReference type="Pfam" id="PF01149">
    <property type="entry name" value="Fapy_DNA_glyco"/>
    <property type="match status" value="1"/>
</dbReference>
<dbReference type="Pfam" id="PF06831">
    <property type="entry name" value="H2TH"/>
    <property type="match status" value="1"/>
</dbReference>
<dbReference type="Pfam" id="PF06827">
    <property type="entry name" value="zf-FPG_IleRS"/>
    <property type="match status" value="1"/>
</dbReference>
<dbReference type="SMART" id="SM00898">
    <property type="entry name" value="Fapy_DNA_glyco"/>
    <property type="match status" value="1"/>
</dbReference>
<dbReference type="SMART" id="SM01232">
    <property type="entry name" value="H2TH"/>
    <property type="match status" value="1"/>
</dbReference>
<dbReference type="SUPFAM" id="SSF57716">
    <property type="entry name" value="Glucocorticoid receptor-like (DNA-binding domain)"/>
    <property type="match status" value="1"/>
</dbReference>
<dbReference type="SUPFAM" id="SSF81624">
    <property type="entry name" value="N-terminal domain of MutM-like DNA repair proteins"/>
    <property type="match status" value="1"/>
</dbReference>
<dbReference type="SUPFAM" id="SSF46946">
    <property type="entry name" value="S13-like H2TH domain"/>
    <property type="match status" value="1"/>
</dbReference>
<dbReference type="PROSITE" id="PS51068">
    <property type="entry name" value="FPG_CAT"/>
    <property type="match status" value="1"/>
</dbReference>
<dbReference type="PROSITE" id="PS01242">
    <property type="entry name" value="ZF_FPG_1"/>
    <property type="match status" value="1"/>
</dbReference>
<dbReference type="PROSITE" id="PS51066">
    <property type="entry name" value="ZF_FPG_2"/>
    <property type="match status" value="1"/>
</dbReference>
<proteinExistence type="inferred from homology"/>
<evidence type="ECO:0000250" key="1"/>
<evidence type="ECO:0000255" key="2">
    <source>
        <dbReference type="HAMAP-Rule" id="MF_00103"/>
    </source>
</evidence>
<gene>
    <name evidence="2" type="primary">mutM</name>
    <name evidence="2" type="synonym">fpg</name>
    <name type="ordered locus">SpyM3_0347</name>
</gene>